<evidence type="ECO:0000255" key="1">
    <source>
        <dbReference type="HAMAP-Rule" id="MF_00815"/>
    </source>
</evidence>
<keyword id="KW-0066">ATP synthesis</keyword>
<keyword id="KW-1003">Cell membrane</keyword>
<keyword id="KW-0139">CF(1)</keyword>
<keyword id="KW-0375">Hydrogen ion transport</keyword>
<keyword id="KW-0406">Ion transport</keyword>
<keyword id="KW-0472">Membrane</keyword>
<keyword id="KW-0813">Transport</keyword>
<feature type="chain" id="PRO_0000073373" description="ATP synthase gamma chain">
    <location>
        <begin position="1"/>
        <end position="288"/>
    </location>
</feature>
<sequence length="288" mass="32106">MASLKEIDTRIKSTKKMKQITKAMNMVSSSKLRRAEKNTKQFTPYMDKMQDAITAVAGASSNTNHPMLRPRKITRSGYLVITSDKGLAGAYSANVLKKLITDIEAKHQDSSEYSIVVLGQQGVDFLKNRGYDIEYSQVDVPDQPSFKSVQALANHAIDLYSEEEIDELNIYYSHYVSVLENKPTSRQVLPLSQEDSSKGHGHLSSYEFEPDKESILSVILPQYVESLIYGTILDAKASEHATRMTAMKNATDNATELIDDLSLEYNRARQAEITQQITEIVGGSAALE</sequence>
<name>ATPG_STAAC</name>
<comment type="function">
    <text evidence="1">Produces ATP from ADP in the presence of a proton gradient across the membrane. The gamma chain is believed to be important in regulating ATPase activity and the flow of protons through the CF(0) complex.</text>
</comment>
<comment type="subunit">
    <text evidence="1">F-type ATPases have 2 components, CF(1) - the catalytic core - and CF(0) - the membrane proton channel. CF(1) has five subunits: alpha(3), beta(3), gamma(1), delta(1), epsilon(1). CF(0) has three main subunits: a, b and c.</text>
</comment>
<comment type="subcellular location">
    <subcellularLocation>
        <location evidence="1">Cell membrane</location>
        <topology evidence="1">Peripheral membrane protein</topology>
    </subcellularLocation>
</comment>
<comment type="similarity">
    <text evidence="1">Belongs to the ATPase gamma chain family.</text>
</comment>
<dbReference type="EMBL" id="CP000046">
    <property type="protein sequence ID" value="AAW38406.1"/>
    <property type="molecule type" value="Genomic_DNA"/>
</dbReference>
<dbReference type="RefSeq" id="WP_000157603.1">
    <property type="nucleotide sequence ID" value="NZ_JBGOFO010000007.1"/>
</dbReference>
<dbReference type="SMR" id="Q5HE96"/>
<dbReference type="GeneID" id="98346411"/>
<dbReference type="KEGG" id="sac:SACOL2096"/>
<dbReference type="HOGENOM" id="CLU_050669_0_1_9"/>
<dbReference type="Proteomes" id="UP000000530">
    <property type="component" value="Chromosome"/>
</dbReference>
<dbReference type="GO" id="GO:0005886">
    <property type="term" value="C:plasma membrane"/>
    <property type="evidence" value="ECO:0007669"/>
    <property type="project" value="UniProtKB-SubCell"/>
</dbReference>
<dbReference type="GO" id="GO:0045259">
    <property type="term" value="C:proton-transporting ATP synthase complex"/>
    <property type="evidence" value="ECO:0007669"/>
    <property type="project" value="UniProtKB-KW"/>
</dbReference>
<dbReference type="GO" id="GO:0005524">
    <property type="term" value="F:ATP binding"/>
    <property type="evidence" value="ECO:0007669"/>
    <property type="project" value="UniProtKB-UniRule"/>
</dbReference>
<dbReference type="GO" id="GO:0046933">
    <property type="term" value="F:proton-transporting ATP synthase activity, rotational mechanism"/>
    <property type="evidence" value="ECO:0007669"/>
    <property type="project" value="UniProtKB-UniRule"/>
</dbReference>
<dbReference type="GO" id="GO:0042777">
    <property type="term" value="P:proton motive force-driven plasma membrane ATP synthesis"/>
    <property type="evidence" value="ECO:0007669"/>
    <property type="project" value="UniProtKB-UniRule"/>
</dbReference>
<dbReference type="CDD" id="cd12151">
    <property type="entry name" value="F1-ATPase_gamma"/>
    <property type="match status" value="1"/>
</dbReference>
<dbReference type="FunFam" id="1.10.287.80:FF:000019">
    <property type="entry name" value="ATP synthase gamma chain"/>
    <property type="match status" value="1"/>
</dbReference>
<dbReference type="FunFam" id="3.40.1380.10:FF:000002">
    <property type="entry name" value="ATP synthase gamma chain"/>
    <property type="match status" value="1"/>
</dbReference>
<dbReference type="Gene3D" id="3.40.1380.10">
    <property type="match status" value="1"/>
</dbReference>
<dbReference type="Gene3D" id="1.10.287.80">
    <property type="entry name" value="ATP synthase, gamma subunit, helix hairpin domain"/>
    <property type="match status" value="1"/>
</dbReference>
<dbReference type="HAMAP" id="MF_00815">
    <property type="entry name" value="ATP_synth_gamma_bact"/>
    <property type="match status" value="1"/>
</dbReference>
<dbReference type="InterPro" id="IPR035968">
    <property type="entry name" value="ATP_synth_F1_ATPase_gsu"/>
</dbReference>
<dbReference type="InterPro" id="IPR000131">
    <property type="entry name" value="ATP_synth_F1_gsu"/>
</dbReference>
<dbReference type="NCBIfam" id="TIGR01146">
    <property type="entry name" value="ATPsyn_F1gamma"/>
    <property type="match status" value="1"/>
</dbReference>
<dbReference type="PANTHER" id="PTHR11693">
    <property type="entry name" value="ATP SYNTHASE GAMMA CHAIN"/>
    <property type="match status" value="1"/>
</dbReference>
<dbReference type="PANTHER" id="PTHR11693:SF22">
    <property type="entry name" value="ATP SYNTHASE SUBUNIT GAMMA, MITOCHONDRIAL"/>
    <property type="match status" value="1"/>
</dbReference>
<dbReference type="Pfam" id="PF00231">
    <property type="entry name" value="ATP-synt"/>
    <property type="match status" value="1"/>
</dbReference>
<dbReference type="PRINTS" id="PR00126">
    <property type="entry name" value="ATPASEGAMMA"/>
</dbReference>
<dbReference type="SUPFAM" id="SSF52943">
    <property type="entry name" value="ATP synthase (F1-ATPase), gamma subunit"/>
    <property type="match status" value="1"/>
</dbReference>
<protein>
    <recommendedName>
        <fullName evidence="1">ATP synthase gamma chain</fullName>
    </recommendedName>
    <alternativeName>
        <fullName evidence="1">ATP synthase F1 sector gamma subunit</fullName>
    </alternativeName>
    <alternativeName>
        <fullName evidence="1">F-ATPase gamma subunit</fullName>
    </alternativeName>
</protein>
<organism>
    <name type="scientific">Staphylococcus aureus (strain COL)</name>
    <dbReference type="NCBI Taxonomy" id="93062"/>
    <lineage>
        <taxon>Bacteria</taxon>
        <taxon>Bacillati</taxon>
        <taxon>Bacillota</taxon>
        <taxon>Bacilli</taxon>
        <taxon>Bacillales</taxon>
        <taxon>Staphylococcaceae</taxon>
        <taxon>Staphylococcus</taxon>
    </lineage>
</organism>
<gene>
    <name evidence="1" type="primary">atpG</name>
    <name type="ordered locus">SACOL2096</name>
</gene>
<reference key="1">
    <citation type="journal article" date="2005" name="J. Bacteriol.">
        <title>Insights on evolution of virulence and resistance from the complete genome analysis of an early methicillin-resistant Staphylococcus aureus strain and a biofilm-producing methicillin-resistant Staphylococcus epidermidis strain.</title>
        <authorList>
            <person name="Gill S.R."/>
            <person name="Fouts D.E."/>
            <person name="Archer G.L."/>
            <person name="Mongodin E.F."/>
            <person name="DeBoy R.T."/>
            <person name="Ravel J."/>
            <person name="Paulsen I.T."/>
            <person name="Kolonay J.F."/>
            <person name="Brinkac L.M."/>
            <person name="Beanan M.J."/>
            <person name="Dodson R.J."/>
            <person name="Daugherty S.C."/>
            <person name="Madupu R."/>
            <person name="Angiuoli S.V."/>
            <person name="Durkin A.S."/>
            <person name="Haft D.H."/>
            <person name="Vamathevan J.J."/>
            <person name="Khouri H."/>
            <person name="Utterback T.R."/>
            <person name="Lee C."/>
            <person name="Dimitrov G."/>
            <person name="Jiang L."/>
            <person name="Qin H."/>
            <person name="Weidman J."/>
            <person name="Tran K."/>
            <person name="Kang K.H."/>
            <person name="Hance I.R."/>
            <person name="Nelson K.E."/>
            <person name="Fraser C.M."/>
        </authorList>
    </citation>
    <scope>NUCLEOTIDE SEQUENCE [LARGE SCALE GENOMIC DNA]</scope>
    <source>
        <strain>COL</strain>
    </source>
</reference>
<accession>Q5HE96</accession>
<proteinExistence type="inferred from homology"/>